<protein>
    <recommendedName>
        <fullName>Transcriptional regulatory protein YvrH</fullName>
    </recommendedName>
</protein>
<comment type="function">
    <text evidence="4 5">Member of the two-component regulatory system YvrG/YvrH that positively regulates 7 transcriptional units (wprA, wapA-yxxG, dltABCDE, sunA, sunT-bdbA-yolJ-bdbB, sigO-rsoA, and sigX-rsiX), and negatively regulates the lytABC operon.</text>
</comment>
<comment type="subcellular location">
    <subcellularLocation>
        <location evidence="6">Cytoplasm</location>
    </subcellularLocation>
</comment>
<comment type="PTM">
    <text evidence="1">Phosphorylated by YvrG.</text>
</comment>
<comment type="sequence caution" evidence="6">
    <conflict type="erroneous initiation">
        <sequence resource="EMBL-CDS" id="CAA11730"/>
    </conflict>
</comment>
<accession>P94504</accession>
<accession>Q7B2K4</accession>
<reference key="1">
    <citation type="journal article" date="1998" name="Microbiology">
        <title>The yvsA-yvqA (293 degrees - 289 degrees) region of the Bacillus subtilis chromosome containing genes involved in metal ion uptake and a putative sigma factor.</title>
        <authorList>
            <person name="Wipat A."/>
            <person name="Brignell C.S."/>
            <person name="Guy J.B."/>
            <person name="Rose M."/>
            <person name="Emmerson P.T."/>
            <person name="Harwood C.R."/>
        </authorList>
    </citation>
    <scope>NUCLEOTIDE SEQUENCE [GENOMIC DNA]</scope>
    <source>
        <strain>168</strain>
    </source>
</reference>
<reference key="2">
    <citation type="journal article" date="1997" name="Nature">
        <title>The complete genome sequence of the Gram-positive bacterium Bacillus subtilis.</title>
        <authorList>
            <person name="Kunst F."/>
            <person name="Ogasawara N."/>
            <person name="Moszer I."/>
            <person name="Albertini A.M."/>
            <person name="Alloni G."/>
            <person name="Azevedo V."/>
            <person name="Bertero M.G."/>
            <person name="Bessieres P."/>
            <person name="Bolotin A."/>
            <person name="Borchert S."/>
            <person name="Borriss R."/>
            <person name="Boursier L."/>
            <person name="Brans A."/>
            <person name="Braun M."/>
            <person name="Brignell S.C."/>
            <person name="Bron S."/>
            <person name="Brouillet S."/>
            <person name="Bruschi C.V."/>
            <person name="Caldwell B."/>
            <person name="Capuano V."/>
            <person name="Carter N.M."/>
            <person name="Choi S.-K."/>
            <person name="Codani J.-J."/>
            <person name="Connerton I.F."/>
            <person name="Cummings N.J."/>
            <person name="Daniel R.A."/>
            <person name="Denizot F."/>
            <person name="Devine K.M."/>
            <person name="Duesterhoeft A."/>
            <person name="Ehrlich S.D."/>
            <person name="Emmerson P.T."/>
            <person name="Entian K.-D."/>
            <person name="Errington J."/>
            <person name="Fabret C."/>
            <person name="Ferrari E."/>
            <person name="Foulger D."/>
            <person name="Fritz C."/>
            <person name="Fujita M."/>
            <person name="Fujita Y."/>
            <person name="Fuma S."/>
            <person name="Galizzi A."/>
            <person name="Galleron N."/>
            <person name="Ghim S.-Y."/>
            <person name="Glaser P."/>
            <person name="Goffeau A."/>
            <person name="Golightly E.J."/>
            <person name="Grandi G."/>
            <person name="Guiseppi G."/>
            <person name="Guy B.J."/>
            <person name="Haga K."/>
            <person name="Haiech J."/>
            <person name="Harwood C.R."/>
            <person name="Henaut A."/>
            <person name="Hilbert H."/>
            <person name="Holsappel S."/>
            <person name="Hosono S."/>
            <person name="Hullo M.-F."/>
            <person name="Itaya M."/>
            <person name="Jones L.-M."/>
            <person name="Joris B."/>
            <person name="Karamata D."/>
            <person name="Kasahara Y."/>
            <person name="Klaerr-Blanchard M."/>
            <person name="Klein C."/>
            <person name="Kobayashi Y."/>
            <person name="Koetter P."/>
            <person name="Koningstein G."/>
            <person name="Krogh S."/>
            <person name="Kumano M."/>
            <person name="Kurita K."/>
            <person name="Lapidus A."/>
            <person name="Lardinois S."/>
            <person name="Lauber J."/>
            <person name="Lazarevic V."/>
            <person name="Lee S.-M."/>
            <person name="Levine A."/>
            <person name="Liu H."/>
            <person name="Masuda S."/>
            <person name="Mauel C."/>
            <person name="Medigue C."/>
            <person name="Medina N."/>
            <person name="Mellado R.P."/>
            <person name="Mizuno M."/>
            <person name="Moestl D."/>
            <person name="Nakai S."/>
            <person name="Noback M."/>
            <person name="Noone D."/>
            <person name="O'Reilly M."/>
            <person name="Ogawa K."/>
            <person name="Ogiwara A."/>
            <person name="Oudega B."/>
            <person name="Park S.-H."/>
            <person name="Parro V."/>
            <person name="Pohl T.M."/>
            <person name="Portetelle D."/>
            <person name="Porwollik S."/>
            <person name="Prescott A.M."/>
            <person name="Presecan E."/>
            <person name="Pujic P."/>
            <person name="Purnelle B."/>
            <person name="Rapoport G."/>
            <person name="Rey M."/>
            <person name="Reynolds S."/>
            <person name="Rieger M."/>
            <person name="Rivolta C."/>
            <person name="Rocha E."/>
            <person name="Roche B."/>
            <person name="Rose M."/>
            <person name="Sadaie Y."/>
            <person name="Sato T."/>
            <person name="Scanlan E."/>
            <person name="Schleich S."/>
            <person name="Schroeter R."/>
            <person name="Scoffone F."/>
            <person name="Sekiguchi J."/>
            <person name="Sekowska A."/>
            <person name="Seror S.J."/>
            <person name="Serror P."/>
            <person name="Shin B.-S."/>
            <person name="Soldo B."/>
            <person name="Sorokin A."/>
            <person name="Tacconi E."/>
            <person name="Takagi T."/>
            <person name="Takahashi H."/>
            <person name="Takemaru K."/>
            <person name="Takeuchi M."/>
            <person name="Tamakoshi A."/>
            <person name="Tanaka T."/>
            <person name="Terpstra P."/>
            <person name="Tognoni A."/>
            <person name="Tosato V."/>
            <person name="Uchiyama S."/>
            <person name="Vandenbol M."/>
            <person name="Vannier F."/>
            <person name="Vassarotti A."/>
            <person name="Viari A."/>
            <person name="Wambutt R."/>
            <person name="Wedler E."/>
            <person name="Wedler H."/>
            <person name="Weitzenegger T."/>
            <person name="Winters P."/>
            <person name="Wipat A."/>
            <person name="Yamamoto H."/>
            <person name="Yamane K."/>
            <person name="Yasumoto K."/>
            <person name="Yata K."/>
            <person name="Yoshida K."/>
            <person name="Yoshikawa H.-F."/>
            <person name="Zumstein E."/>
            <person name="Yoshikawa H."/>
            <person name="Danchin A."/>
        </authorList>
    </citation>
    <scope>NUCLEOTIDE SEQUENCE [LARGE SCALE GENOMIC DNA]</scope>
    <source>
        <strain>168</strain>
    </source>
</reference>
<reference key="3">
    <citation type="journal article" date="2009" name="Microbiology">
        <title>From a consortium sequence to a unified sequence: the Bacillus subtilis 168 reference genome a decade later.</title>
        <authorList>
            <person name="Barbe V."/>
            <person name="Cruveiller S."/>
            <person name="Kunst F."/>
            <person name="Lenoble P."/>
            <person name="Meurice G."/>
            <person name="Sekowska A."/>
            <person name="Vallenet D."/>
            <person name="Wang T."/>
            <person name="Moszer I."/>
            <person name="Medigue C."/>
            <person name="Danchin A."/>
        </authorList>
    </citation>
    <scope>SEQUENCE REVISION TO 208</scope>
</reference>
<reference key="4">
    <citation type="journal article" date="2001" name="J. Bacteriol.">
        <title>Comprehensive DNA microarray analysis of Bacillus subtilis two-component regulatory systems.</title>
        <authorList>
            <person name="Kobayashi K."/>
            <person name="Ogura M."/>
            <person name="Yamaguchi H."/>
            <person name="Yoshida K."/>
            <person name="Ogasawara N."/>
            <person name="Tanaka T."/>
            <person name="Fujita Y."/>
        </authorList>
    </citation>
    <scope>FUNCTION</scope>
</reference>
<reference key="5">
    <citation type="journal article" date="2005" name="Biosci. Biotechnol. Biochem.">
        <title>Functional analysis of the YvrGHb two-component system of Bacillus subtilis: identification of the regulated genes by DNA microarray and northern blot analyses.</title>
        <authorList>
            <person name="Serizawa M."/>
            <person name="Kodama K."/>
            <person name="Yamamoto H."/>
            <person name="Kobayashi K."/>
            <person name="Ogasawara N."/>
            <person name="Sekiguchi J."/>
        </authorList>
    </citation>
    <scope>FUNCTION</scope>
</reference>
<gene>
    <name type="primary">yvrH</name>
    <name type="synonym">yvrHb</name>
    <name type="ordered locus">BSU33220</name>
</gene>
<evidence type="ECO:0000250" key="1"/>
<evidence type="ECO:0000255" key="2">
    <source>
        <dbReference type="PROSITE-ProRule" id="PRU00169"/>
    </source>
</evidence>
<evidence type="ECO:0000255" key="3">
    <source>
        <dbReference type="PROSITE-ProRule" id="PRU01091"/>
    </source>
</evidence>
<evidence type="ECO:0000269" key="4">
    <source>
    </source>
</evidence>
<evidence type="ECO:0000269" key="5">
    <source>
    </source>
</evidence>
<evidence type="ECO:0000305" key="6"/>
<proteinExistence type="inferred from homology"/>
<organism>
    <name type="scientific">Bacillus subtilis (strain 168)</name>
    <dbReference type="NCBI Taxonomy" id="224308"/>
    <lineage>
        <taxon>Bacteria</taxon>
        <taxon>Bacillati</taxon>
        <taxon>Bacillota</taxon>
        <taxon>Bacilli</taxon>
        <taxon>Bacillales</taxon>
        <taxon>Bacillaceae</taxon>
        <taxon>Bacillus</taxon>
    </lineage>
</organism>
<feature type="chain" id="PRO_0000360779" description="Transcriptional regulatory protein YvrH">
    <location>
        <begin position="1"/>
        <end position="237"/>
    </location>
</feature>
<feature type="domain" description="Response regulatory" evidence="2">
    <location>
        <begin position="5"/>
        <end position="119"/>
    </location>
</feature>
<feature type="DNA-binding region" description="OmpR/PhoB-type" evidence="3">
    <location>
        <begin position="131"/>
        <end position="230"/>
    </location>
</feature>
<feature type="modified residue" description="4-aspartylphosphate" evidence="2">
    <location>
        <position position="55"/>
    </location>
</feature>
<feature type="sequence conflict" description="In Ref. 1; CAA11730." evidence="6" ref="1">
    <original>I</original>
    <variation>T</variation>
    <location>
        <position position="208"/>
    </location>
</feature>
<sequence>MENASILIVDDEKAIVDMIKRVLEKEGYRNILDAASAEEAIPVVKANKVDLIVLDVMMGGMSGFEACTLIREYSDAPIFFLTARSSDADKLSGFAVGADDYITKPFNPLELAARIRAHLKRTYQSKETSSNQTYTYDYFTFSPQNAELIVGGEAVACSAQLLQLLQYFCEHPNVVLSKDQIYEKVWGYPSYGDNNTVMVHIRKLREKIERDPSNPEYIVTVRGLGYRFIPNPEGKRS</sequence>
<dbReference type="EMBL" id="AJ223978">
    <property type="protein sequence ID" value="CAA11730.1"/>
    <property type="status" value="ALT_INIT"/>
    <property type="molecule type" value="Genomic_DNA"/>
</dbReference>
<dbReference type="EMBL" id="AL009126">
    <property type="protein sequence ID" value="CAB15312.2"/>
    <property type="molecule type" value="Genomic_DNA"/>
</dbReference>
<dbReference type="PIR" id="C70047">
    <property type="entry name" value="C70047"/>
</dbReference>
<dbReference type="RefSeq" id="NP_391202.2">
    <property type="nucleotide sequence ID" value="NC_000964.3"/>
</dbReference>
<dbReference type="RefSeq" id="WP_003243545.1">
    <property type="nucleotide sequence ID" value="NZ_OZ025638.1"/>
</dbReference>
<dbReference type="SMR" id="P94504"/>
<dbReference type="FunCoup" id="P94504">
    <property type="interactions" value="92"/>
</dbReference>
<dbReference type="STRING" id="224308.BSU33221"/>
<dbReference type="PaxDb" id="224308-BSU33221"/>
<dbReference type="EnsemblBacteria" id="CAB15312">
    <property type="protein sequence ID" value="CAB15312"/>
    <property type="gene ID" value="BSU_33221"/>
</dbReference>
<dbReference type="GeneID" id="76979804"/>
<dbReference type="GeneID" id="935974"/>
<dbReference type="KEGG" id="bsu:BSU33221"/>
<dbReference type="PATRIC" id="fig|224308.43.peg.3481"/>
<dbReference type="eggNOG" id="COG0745">
    <property type="taxonomic scope" value="Bacteria"/>
</dbReference>
<dbReference type="InParanoid" id="P94504"/>
<dbReference type="OrthoDB" id="9790442at2"/>
<dbReference type="PhylomeDB" id="P94504"/>
<dbReference type="BioCyc" id="BSUB:BSU33221-MONOMER"/>
<dbReference type="Proteomes" id="UP000001570">
    <property type="component" value="Chromosome"/>
</dbReference>
<dbReference type="GO" id="GO:0005829">
    <property type="term" value="C:cytosol"/>
    <property type="evidence" value="ECO:0000318"/>
    <property type="project" value="GO_Central"/>
</dbReference>
<dbReference type="GO" id="GO:0032993">
    <property type="term" value="C:protein-DNA complex"/>
    <property type="evidence" value="ECO:0000318"/>
    <property type="project" value="GO_Central"/>
</dbReference>
<dbReference type="GO" id="GO:0000156">
    <property type="term" value="F:phosphorelay response regulator activity"/>
    <property type="evidence" value="ECO:0000318"/>
    <property type="project" value="GO_Central"/>
</dbReference>
<dbReference type="GO" id="GO:0000976">
    <property type="term" value="F:transcription cis-regulatory region binding"/>
    <property type="evidence" value="ECO:0000318"/>
    <property type="project" value="GO_Central"/>
</dbReference>
<dbReference type="GO" id="GO:0006355">
    <property type="term" value="P:regulation of DNA-templated transcription"/>
    <property type="evidence" value="ECO:0000318"/>
    <property type="project" value="GO_Central"/>
</dbReference>
<dbReference type="CDD" id="cd17574">
    <property type="entry name" value="REC_OmpR"/>
    <property type="match status" value="1"/>
</dbReference>
<dbReference type="CDD" id="cd00383">
    <property type="entry name" value="trans_reg_C"/>
    <property type="match status" value="1"/>
</dbReference>
<dbReference type="FunFam" id="3.40.50.2300:FF:000001">
    <property type="entry name" value="DNA-binding response regulator PhoB"/>
    <property type="match status" value="1"/>
</dbReference>
<dbReference type="FunFam" id="1.10.10.10:FF:000018">
    <property type="entry name" value="DNA-binding response regulator ResD"/>
    <property type="match status" value="1"/>
</dbReference>
<dbReference type="Gene3D" id="3.40.50.2300">
    <property type="match status" value="1"/>
</dbReference>
<dbReference type="Gene3D" id="6.10.250.690">
    <property type="match status" value="1"/>
</dbReference>
<dbReference type="Gene3D" id="1.10.10.10">
    <property type="entry name" value="Winged helix-like DNA-binding domain superfamily/Winged helix DNA-binding domain"/>
    <property type="match status" value="1"/>
</dbReference>
<dbReference type="InterPro" id="IPR011006">
    <property type="entry name" value="CheY-like_superfamily"/>
</dbReference>
<dbReference type="InterPro" id="IPR001867">
    <property type="entry name" value="OmpR/PhoB-type_DNA-bd"/>
</dbReference>
<dbReference type="InterPro" id="IPR016032">
    <property type="entry name" value="Sig_transdc_resp-reg_C-effctor"/>
</dbReference>
<dbReference type="InterPro" id="IPR001789">
    <property type="entry name" value="Sig_transdc_resp-reg_receiver"/>
</dbReference>
<dbReference type="InterPro" id="IPR039420">
    <property type="entry name" value="WalR-like"/>
</dbReference>
<dbReference type="InterPro" id="IPR036388">
    <property type="entry name" value="WH-like_DNA-bd_sf"/>
</dbReference>
<dbReference type="PANTHER" id="PTHR48111">
    <property type="entry name" value="REGULATOR OF RPOS"/>
    <property type="match status" value="1"/>
</dbReference>
<dbReference type="PANTHER" id="PTHR48111:SF52">
    <property type="entry name" value="TRANSCRIPTIONAL REGULATORY PROTEIN YVRH"/>
    <property type="match status" value="1"/>
</dbReference>
<dbReference type="Pfam" id="PF00072">
    <property type="entry name" value="Response_reg"/>
    <property type="match status" value="1"/>
</dbReference>
<dbReference type="Pfam" id="PF00486">
    <property type="entry name" value="Trans_reg_C"/>
    <property type="match status" value="1"/>
</dbReference>
<dbReference type="SMART" id="SM00448">
    <property type="entry name" value="REC"/>
    <property type="match status" value="1"/>
</dbReference>
<dbReference type="SMART" id="SM00862">
    <property type="entry name" value="Trans_reg_C"/>
    <property type="match status" value="1"/>
</dbReference>
<dbReference type="SUPFAM" id="SSF46894">
    <property type="entry name" value="C-terminal effector domain of the bipartite response regulators"/>
    <property type="match status" value="1"/>
</dbReference>
<dbReference type="SUPFAM" id="SSF52172">
    <property type="entry name" value="CheY-like"/>
    <property type="match status" value="1"/>
</dbReference>
<dbReference type="PROSITE" id="PS51755">
    <property type="entry name" value="OMPR_PHOB"/>
    <property type="match status" value="1"/>
</dbReference>
<dbReference type="PROSITE" id="PS50110">
    <property type="entry name" value="RESPONSE_REGULATORY"/>
    <property type="match status" value="1"/>
</dbReference>
<keyword id="KW-0010">Activator</keyword>
<keyword id="KW-0963">Cytoplasm</keyword>
<keyword id="KW-0238">DNA-binding</keyword>
<keyword id="KW-0597">Phosphoprotein</keyword>
<keyword id="KW-1185">Reference proteome</keyword>
<keyword id="KW-0678">Repressor</keyword>
<keyword id="KW-0804">Transcription</keyword>
<keyword id="KW-0805">Transcription regulation</keyword>
<keyword id="KW-0902">Two-component regulatory system</keyword>
<name>YVRH_BACSU</name>